<proteinExistence type="inferred from homology"/>
<dbReference type="EC" id="2.7.11.5" evidence="1"/>
<dbReference type="EC" id="3.1.3.-" evidence="1"/>
<dbReference type="EMBL" id="CP000010">
    <property type="protein sequence ID" value="AAU48649.1"/>
    <property type="molecule type" value="Genomic_DNA"/>
</dbReference>
<dbReference type="RefSeq" id="WP_004525974.1">
    <property type="nucleotide sequence ID" value="NC_006348.1"/>
</dbReference>
<dbReference type="RefSeq" id="YP_101940.1">
    <property type="nucleotide sequence ID" value="NC_006348.1"/>
</dbReference>
<dbReference type="SMR" id="Q62MX7"/>
<dbReference type="GeneID" id="93058891"/>
<dbReference type="KEGG" id="bma:BMA0094"/>
<dbReference type="PATRIC" id="fig|243160.12.peg.92"/>
<dbReference type="eggNOG" id="COG4579">
    <property type="taxonomic scope" value="Bacteria"/>
</dbReference>
<dbReference type="HOGENOM" id="CLU_033804_1_1_4"/>
<dbReference type="Proteomes" id="UP000006693">
    <property type="component" value="Chromosome 1"/>
</dbReference>
<dbReference type="GO" id="GO:0005737">
    <property type="term" value="C:cytoplasm"/>
    <property type="evidence" value="ECO:0007669"/>
    <property type="project" value="UniProtKB-SubCell"/>
</dbReference>
<dbReference type="GO" id="GO:0008772">
    <property type="term" value="F:[isocitrate dehydrogenase (NADP+)] kinase activity"/>
    <property type="evidence" value="ECO:0007669"/>
    <property type="project" value="UniProtKB-UniRule"/>
</dbReference>
<dbReference type="GO" id="GO:0016208">
    <property type="term" value="F:AMP binding"/>
    <property type="evidence" value="ECO:0007669"/>
    <property type="project" value="TreeGrafter"/>
</dbReference>
<dbReference type="GO" id="GO:0005524">
    <property type="term" value="F:ATP binding"/>
    <property type="evidence" value="ECO:0007669"/>
    <property type="project" value="UniProtKB-UniRule"/>
</dbReference>
<dbReference type="GO" id="GO:0004721">
    <property type="term" value="F:phosphoprotein phosphatase activity"/>
    <property type="evidence" value="ECO:0007669"/>
    <property type="project" value="UniProtKB-KW"/>
</dbReference>
<dbReference type="GO" id="GO:0004674">
    <property type="term" value="F:protein serine/threonine kinase activity"/>
    <property type="evidence" value="ECO:0007669"/>
    <property type="project" value="UniProtKB-KW"/>
</dbReference>
<dbReference type="GO" id="GO:0006006">
    <property type="term" value="P:glucose metabolic process"/>
    <property type="evidence" value="ECO:0007669"/>
    <property type="project" value="InterPro"/>
</dbReference>
<dbReference type="GO" id="GO:0006097">
    <property type="term" value="P:glyoxylate cycle"/>
    <property type="evidence" value="ECO:0007669"/>
    <property type="project" value="UniProtKB-UniRule"/>
</dbReference>
<dbReference type="GO" id="GO:0006099">
    <property type="term" value="P:tricarboxylic acid cycle"/>
    <property type="evidence" value="ECO:0007669"/>
    <property type="project" value="UniProtKB-UniRule"/>
</dbReference>
<dbReference type="HAMAP" id="MF_00747">
    <property type="entry name" value="AceK"/>
    <property type="match status" value="1"/>
</dbReference>
<dbReference type="InterPro" id="IPR046855">
    <property type="entry name" value="AceK_kinase"/>
</dbReference>
<dbReference type="InterPro" id="IPR046854">
    <property type="entry name" value="AceK_regulatory"/>
</dbReference>
<dbReference type="InterPro" id="IPR010452">
    <property type="entry name" value="Isocitrate_DH_AceK"/>
</dbReference>
<dbReference type="NCBIfam" id="NF002804">
    <property type="entry name" value="PRK02946.1"/>
    <property type="match status" value="1"/>
</dbReference>
<dbReference type="PANTHER" id="PTHR39559">
    <property type="match status" value="1"/>
</dbReference>
<dbReference type="PANTHER" id="PTHR39559:SF1">
    <property type="entry name" value="ISOCITRATE DEHYDROGENASE KINASE_PHOSPHATASE"/>
    <property type="match status" value="1"/>
</dbReference>
<dbReference type="Pfam" id="PF06315">
    <property type="entry name" value="AceK_kinase"/>
    <property type="match status" value="1"/>
</dbReference>
<dbReference type="Pfam" id="PF20423">
    <property type="entry name" value="AceK_regulatory"/>
    <property type="match status" value="1"/>
</dbReference>
<dbReference type="PIRSF" id="PIRSF000719">
    <property type="entry name" value="AceK"/>
    <property type="match status" value="1"/>
</dbReference>
<evidence type="ECO:0000255" key="1">
    <source>
        <dbReference type="HAMAP-Rule" id="MF_00747"/>
    </source>
</evidence>
<reference key="1">
    <citation type="journal article" date="2004" name="Proc. Natl. Acad. Sci. U.S.A.">
        <title>Structural flexibility in the Burkholderia mallei genome.</title>
        <authorList>
            <person name="Nierman W.C."/>
            <person name="DeShazer D."/>
            <person name="Kim H.S."/>
            <person name="Tettelin H."/>
            <person name="Nelson K.E."/>
            <person name="Feldblyum T.V."/>
            <person name="Ulrich R.L."/>
            <person name="Ronning C.M."/>
            <person name="Brinkac L.M."/>
            <person name="Daugherty S.C."/>
            <person name="Davidsen T.D."/>
            <person name="DeBoy R.T."/>
            <person name="Dimitrov G."/>
            <person name="Dodson R.J."/>
            <person name="Durkin A.S."/>
            <person name="Gwinn M.L."/>
            <person name="Haft D.H."/>
            <person name="Khouri H.M."/>
            <person name="Kolonay J.F."/>
            <person name="Madupu R."/>
            <person name="Mohammoud Y."/>
            <person name="Nelson W.C."/>
            <person name="Radune D."/>
            <person name="Romero C.M."/>
            <person name="Sarria S."/>
            <person name="Selengut J."/>
            <person name="Shamblin C."/>
            <person name="Sullivan S.A."/>
            <person name="White O."/>
            <person name="Yu Y."/>
            <person name="Zafar N."/>
            <person name="Zhou L."/>
            <person name="Fraser C.M."/>
        </authorList>
    </citation>
    <scope>NUCLEOTIDE SEQUENCE [LARGE SCALE GENOMIC DNA]</scope>
    <source>
        <strain>ATCC 23344</strain>
    </source>
</reference>
<comment type="function">
    <text evidence="1">Bifunctional enzyme which can phosphorylate or dephosphorylate isocitrate dehydrogenase (IDH) on a specific serine residue. This is a regulatory mechanism which enables bacteria to bypass the Krebs cycle via the glyoxylate shunt in response to the source of carbon. When bacteria are grown on glucose, IDH is fully active and unphosphorylated, but when grown on acetate or ethanol, the activity of IDH declines drastically concomitant with its phosphorylation.</text>
</comment>
<comment type="catalytic activity">
    <reaction evidence="1">
        <text>L-seryl-[isocitrate dehydrogenase] + ATP = O-phospho-L-seryl-[isocitrate dehydrogenase] + ADP + H(+)</text>
        <dbReference type="Rhea" id="RHEA:43540"/>
        <dbReference type="Rhea" id="RHEA-COMP:10605"/>
        <dbReference type="Rhea" id="RHEA-COMP:10606"/>
        <dbReference type="ChEBI" id="CHEBI:15378"/>
        <dbReference type="ChEBI" id="CHEBI:29999"/>
        <dbReference type="ChEBI" id="CHEBI:30616"/>
        <dbReference type="ChEBI" id="CHEBI:83421"/>
        <dbReference type="ChEBI" id="CHEBI:456216"/>
        <dbReference type="EC" id="2.7.11.5"/>
    </reaction>
</comment>
<comment type="subcellular location">
    <subcellularLocation>
        <location evidence="1">Cytoplasm</location>
    </subcellularLocation>
</comment>
<comment type="similarity">
    <text evidence="1">Belongs to the AceK family.</text>
</comment>
<feature type="chain" id="PRO_0000057896" description="Isocitrate dehydrogenase kinase/phosphatase">
    <location>
        <begin position="1"/>
        <end position="603"/>
    </location>
</feature>
<feature type="active site" evidence="1">
    <location>
        <position position="383"/>
    </location>
</feature>
<feature type="binding site" evidence="1">
    <location>
        <begin position="327"/>
        <end position="333"/>
    </location>
    <ligand>
        <name>ATP</name>
        <dbReference type="ChEBI" id="CHEBI:30616"/>
    </ligand>
</feature>
<feature type="binding site" evidence="1">
    <location>
        <position position="348"/>
    </location>
    <ligand>
        <name>ATP</name>
        <dbReference type="ChEBI" id="CHEBI:30616"/>
    </ligand>
</feature>
<accession>Q62MX7</accession>
<sequence>MNHFPKLLSSQIGFDVAQTILENFDRHYRIFREAAVEAKDLFERADWHGLQRLARERITSYDDRVRECVELLEDEYDAENIDNEVWPQIKLHYIGLLTSHRQPECAETFFNSVCCKILHRAYFNNDFIFVRPAISTEYIENDEPAAKPTYRAYYPGSEGLAATLERIVTNFQLNPPFEDLERDIACIMQAIHDEFGAFDEAVNFQIHVLSSLFYRNKTAYVVGRIINGDRVLPFAVPIRHARAGILALDTVLLRRDQLKIIFSFSHSYFLVDMNVPSAYVQFLRSIMPGKPKAEIYTSVGLQKQGKNLFYRDLLHHLSHSSDRFIVAPGIKGLVMLVFTLPSFPYVFKMIKDHFPPPKDTTREQIMAKYLLVKRHDRLGRMADTLEYSSVALPLARLDDALVRELEKEVPSLIEYEGENLVIKHLYIERRMVPLNLYLQNGSDAEIEHGVREYGNAVKELMQANIFPGDMLYKNFGVTRHGRVVFYDYDEIEYLTDCNVRRVPPPRNDEDEMSGEPWYTVGPHDIFPETYAPFLLGDPRVREHFLAHHADFFDPQLWQDSKDRLLRGELPDFFAYEPALRFCIRYPERFAPGDAADGGKLAAA</sequence>
<gene>
    <name evidence="1" type="primary">aceK</name>
    <name type="ordered locus">BMA0094</name>
</gene>
<name>ACEK_BURMA</name>
<keyword id="KW-0067">ATP-binding</keyword>
<keyword id="KW-0963">Cytoplasm</keyword>
<keyword id="KW-0329">Glyoxylate bypass</keyword>
<keyword id="KW-0378">Hydrolase</keyword>
<keyword id="KW-0418">Kinase</keyword>
<keyword id="KW-0547">Nucleotide-binding</keyword>
<keyword id="KW-0904">Protein phosphatase</keyword>
<keyword id="KW-1185">Reference proteome</keyword>
<keyword id="KW-0723">Serine/threonine-protein kinase</keyword>
<keyword id="KW-0808">Transferase</keyword>
<keyword id="KW-0816">Tricarboxylic acid cycle</keyword>
<organism>
    <name type="scientific">Burkholderia mallei (strain ATCC 23344)</name>
    <dbReference type="NCBI Taxonomy" id="243160"/>
    <lineage>
        <taxon>Bacteria</taxon>
        <taxon>Pseudomonadati</taxon>
        <taxon>Pseudomonadota</taxon>
        <taxon>Betaproteobacteria</taxon>
        <taxon>Burkholderiales</taxon>
        <taxon>Burkholderiaceae</taxon>
        <taxon>Burkholderia</taxon>
        <taxon>pseudomallei group</taxon>
    </lineage>
</organism>
<protein>
    <recommendedName>
        <fullName evidence="1">Isocitrate dehydrogenase kinase/phosphatase</fullName>
        <shortName evidence="1">IDH kinase/phosphatase</shortName>
        <shortName evidence="1">IDHK/P</shortName>
        <ecNumber evidence="1">2.7.11.5</ecNumber>
        <ecNumber evidence="1">3.1.3.-</ecNumber>
    </recommendedName>
</protein>